<feature type="chain" id="PRO_0000443302" description="(+)-eremophilene synthase">
    <location>
        <begin position="1"/>
        <end position="357"/>
    </location>
</feature>
<feature type="short sequence motif" description="DDXXE motif" evidence="5">
    <location>
        <begin position="100"/>
        <end position="105"/>
    </location>
</feature>
<feature type="binding site" evidence="1">
    <location>
        <position position="100"/>
    </location>
    <ligand>
        <name>Mg(2+)</name>
        <dbReference type="ChEBI" id="CHEBI:18420"/>
        <label>1</label>
    </ligand>
</feature>
<feature type="binding site" evidence="1">
    <location>
        <position position="105"/>
    </location>
    <ligand>
        <name>Mg(2+)</name>
        <dbReference type="ChEBI" id="CHEBI:18420"/>
        <label>1</label>
    </ligand>
</feature>
<feature type="binding site" evidence="1">
    <location>
        <position position="105"/>
    </location>
    <ligand>
        <name>Mg(2+)</name>
        <dbReference type="ChEBI" id="CHEBI:18420"/>
        <label>2</label>
    </ligand>
</feature>
<feature type="binding site" evidence="1">
    <location>
        <position position="198"/>
    </location>
    <ligand>
        <name>substrate</name>
    </ligand>
</feature>
<feature type="binding site" evidence="1">
    <location>
        <position position="244"/>
    </location>
    <ligand>
        <name>Mg(2+)</name>
        <dbReference type="ChEBI" id="CHEBI:18420"/>
        <label>3</label>
    </ligand>
</feature>
<feature type="binding site" evidence="1">
    <location>
        <position position="248"/>
    </location>
    <ligand>
        <name>Mg(2+)</name>
        <dbReference type="ChEBI" id="CHEBI:18420"/>
        <label>3</label>
    </ligand>
</feature>
<feature type="binding site" evidence="1">
    <location>
        <position position="251"/>
    </location>
    <ligand>
        <name>substrate</name>
    </ligand>
</feature>
<feature type="binding site" evidence="1">
    <location>
        <position position="252"/>
    </location>
    <ligand>
        <name>Mg(2+)</name>
        <dbReference type="ChEBI" id="CHEBI:18420"/>
        <label>3</label>
    </ligand>
</feature>
<feature type="binding site" evidence="1">
    <location>
        <begin position="331"/>
        <end position="332"/>
    </location>
    <ligand>
        <name>substrate</name>
    </ligand>
</feature>
<reference key="1">
    <citation type="journal article" date="2013" name="PLoS Pathog.">
        <title>Deciphering the cryptic genome: genome-wide analyses of the rice pathogen Fusarium fujikuroi reveal complex regulation of secondary metabolism and novel metabolites.</title>
        <authorList>
            <person name="Wiemann P."/>
            <person name="Sieber C.M.K."/>
            <person name="von Bargen K.W."/>
            <person name="Studt L."/>
            <person name="Niehaus E.-M."/>
            <person name="Espino J.J."/>
            <person name="Huss K."/>
            <person name="Michielse C.B."/>
            <person name="Albermann S."/>
            <person name="Wagner D."/>
            <person name="Bergner S.V."/>
            <person name="Connolly L.R."/>
            <person name="Fischer A."/>
            <person name="Reuter G."/>
            <person name="Kleigrewe K."/>
            <person name="Bald T."/>
            <person name="Wingfield B.D."/>
            <person name="Ophir R."/>
            <person name="Freeman S."/>
            <person name="Hippler M."/>
            <person name="Smith K.M."/>
            <person name="Brown D.W."/>
            <person name="Proctor R.H."/>
            <person name="Muensterkoetter M."/>
            <person name="Freitag M."/>
            <person name="Humpf H.-U."/>
            <person name="Gueldener U."/>
            <person name="Tudzynski B."/>
        </authorList>
    </citation>
    <scope>NUCLEOTIDE SEQUENCE [LARGE SCALE GENOMIC DNA]</scope>
    <source>
        <strain>CBS 195.34 / IMI 58289 / NRRL A-6831</strain>
    </source>
</reference>
<reference key="2">
    <citation type="journal article" date="2016" name="Angew. Chem. Int. Ed.">
        <title>Mechanistic characterisation of two sesquiterpene cyclases from the plant pathogenic fungus Fusarium fujikuroi.</title>
        <authorList>
            <person name="Burkhardt I."/>
            <person name="Siemon T."/>
            <person name="Henrot M."/>
            <person name="Studt L."/>
            <person name="Roesler S."/>
            <person name="Tudzynski B."/>
            <person name="Christmann M."/>
            <person name="Dickschat J.S."/>
        </authorList>
    </citation>
    <scope>FUNCTION</scope>
    <scope>CATALYTIC ACTIVITY</scope>
    <scope>SUBSTRATE SPECIFICITY</scope>
    <scope>DOMAIN</scope>
    <scope>REACTION MECHANISM</scope>
</reference>
<keyword id="KW-0456">Lyase</keyword>
<keyword id="KW-0460">Magnesium</keyword>
<keyword id="KW-0479">Metal-binding</keyword>
<keyword id="KW-1185">Reference proteome</keyword>
<evidence type="ECO:0000250" key="1">
    <source>
        <dbReference type="UniProtKB" id="B5HDJ6"/>
    </source>
</evidence>
<evidence type="ECO:0000269" key="2">
    <source>
    </source>
</evidence>
<evidence type="ECO:0000303" key="3">
    <source>
    </source>
</evidence>
<evidence type="ECO:0000305" key="4"/>
<evidence type="ECO:0000305" key="5">
    <source>
    </source>
</evidence>
<evidence type="ECO:0000312" key="6">
    <source>
        <dbReference type="EMBL" id="CCT65043.1"/>
    </source>
</evidence>
<organism>
    <name type="scientific">Gibberella fujikuroi (strain CBS 195.34 / IMI 58289 / NRRL A-6831)</name>
    <name type="common">Bakanae and foot rot disease fungus</name>
    <name type="synonym">Fusarium fujikuroi</name>
    <dbReference type="NCBI Taxonomy" id="1279085"/>
    <lineage>
        <taxon>Eukaryota</taxon>
        <taxon>Fungi</taxon>
        <taxon>Dikarya</taxon>
        <taxon>Ascomycota</taxon>
        <taxon>Pezizomycotina</taxon>
        <taxon>Sordariomycetes</taxon>
        <taxon>Hypocreomycetidae</taxon>
        <taxon>Hypocreales</taxon>
        <taxon>Nectriaceae</taxon>
        <taxon>Fusarium</taxon>
        <taxon>Fusarium fujikuroi species complex</taxon>
    </lineage>
</organism>
<gene>
    <name evidence="3" type="primary">STC3</name>
    <name evidence="6" type="ORF">FFUJ_04067</name>
</gene>
<accession>S0DX56</accession>
<name>EREMS_GIBF5</name>
<proteinExistence type="evidence at protein level"/>
<protein>
    <recommendedName>
        <fullName evidence="3">(+)-eremophilene synthase</fullName>
        <ecNumber evidence="2">4.2.3.164</ecNumber>
    </recommendedName>
    <alternativeName>
        <fullName evidence="3">Sesquiterpene cyclase</fullName>
    </alternativeName>
    <alternativeName>
        <fullName evidence="3">Terpene synthase</fullName>
    </alternativeName>
    <alternativeName>
        <fullName evidence="3">Type I terpene cyclase</fullName>
    </alternativeName>
</protein>
<dbReference type="EC" id="4.2.3.164" evidence="2"/>
<dbReference type="EMBL" id="HF679024">
    <property type="protein sequence ID" value="CCT65043.1"/>
    <property type="molecule type" value="Genomic_DNA"/>
</dbReference>
<dbReference type="SMR" id="S0DX56"/>
<dbReference type="STRING" id="1279085.S0DX56"/>
<dbReference type="EnsemblFungi" id="CCT65043">
    <property type="protein sequence ID" value="CCT65043"/>
    <property type="gene ID" value="FFUJ_04067"/>
</dbReference>
<dbReference type="KEGG" id="ag:CCT65043"/>
<dbReference type="VEuPathDB" id="FungiDB:FFUJ_04067"/>
<dbReference type="HOGENOM" id="CLU_042538_0_1_1"/>
<dbReference type="BRENDA" id="4.2.3.164">
    <property type="organism ID" value="2425"/>
</dbReference>
<dbReference type="UniPathway" id="UPA00213"/>
<dbReference type="Proteomes" id="UP000016800">
    <property type="component" value="Chromosome 2"/>
</dbReference>
<dbReference type="GO" id="GO:0046872">
    <property type="term" value="F:metal ion binding"/>
    <property type="evidence" value="ECO:0007669"/>
    <property type="project" value="UniProtKB-KW"/>
</dbReference>
<dbReference type="GO" id="GO:0010333">
    <property type="term" value="F:terpene synthase activity"/>
    <property type="evidence" value="ECO:0007669"/>
    <property type="project" value="InterPro"/>
</dbReference>
<dbReference type="GO" id="GO:0016114">
    <property type="term" value="P:terpenoid biosynthetic process"/>
    <property type="evidence" value="ECO:0007669"/>
    <property type="project" value="UniProtKB-UniPathway"/>
</dbReference>
<dbReference type="Gene3D" id="1.10.600.10">
    <property type="entry name" value="Farnesyl Diphosphate Synthase"/>
    <property type="match status" value="1"/>
</dbReference>
<dbReference type="InterPro" id="IPR008949">
    <property type="entry name" value="Isoprenoid_synthase_dom_sf"/>
</dbReference>
<dbReference type="InterPro" id="IPR034686">
    <property type="entry name" value="Terpene_cyclase-like_2"/>
</dbReference>
<dbReference type="PANTHER" id="PTHR35201:SF4">
    <property type="entry name" value="BETA-PINACENE SYNTHASE-RELATED"/>
    <property type="match status" value="1"/>
</dbReference>
<dbReference type="PANTHER" id="PTHR35201">
    <property type="entry name" value="TERPENE SYNTHASE"/>
    <property type="match status" value="1"/>
</dbReference>
<dbReference type="Pfam" id="PF19086">
    <property type="entry name" value="Terpene_syn_C_2"/>
    <property type="match status" value="1"/>
</dbReference>
<dbReference type="SFLD" id="SFLDS00005">
    <property type="entry name" value="Isoprenoid_Synthase_Type_I"/>
    <property type="match status" value="1"/>
</dbReference>
<dbReference type="SFLD" id="SFLDG01020">
    <property type="entry name" value="Terpene_Cyclase_Like_2"/>
    <property type="match status" value="1"/>
</dbReference>
<dbReference type="SUPFAM" id="SSF48576">
    <property type="entry name" value="Terpenoid synthases"/>
    <property type="match status" value="1"/>
</dbReference>
<sequence length="357" mass="40971">MIATINGDTKINGKGHPTEVRIPDMFGSIMSATPMVNPHHFKVKAAADAFIADYLKMDKHEATKNRKADFCFCASAMAPHADAEALRTMVDWLNWIFYFDDDFDEGQLDRDPVAAEKEIRHTLAVLEEGAEIPDRELHPLRYLFRTIWDRVKERAYPDVQTQFKITHKRYLDGLLHQVEATRDGNGQPRTEEDYIRMRRRTVGGYPCISLIAYAHNVDLSQEAFEHPSVQECIAVGCDLAWIHNDIVSYKKDVKSGIEHNFITVLKKNGFTTQQAMDRAGELQDECYRRWYLALASMPIWGESIDREVLRYIEACHSFPLGDLLWSFQTGRYLGATEGYKLHETRVLDLSDLEPIAV</sequence>
<comment type="function">
    <text evidence="2">Catalyzes the conversion of (2E,6E)-farnesyl diphosphate (FPP) to yield the bicyclic sesquiterpene eremophilene via a 1,10-cyclization, which requires the abstraction of the pyrophosphate from FPP to yield the (E,E)-germacradienyl cation. The only accepted substrate is farnesyl diphosphate (FPP).</text>
</comment>
<comment type="catalytic activity">
    <reaction evidence="2">
        <text>(2E,6E)-farnesyl diphosphate = (+)-eremophilene + diphosphate</text>
        <dbReference type="Rhea" id="RHEA:52804"/>
        <dbReference type="ChEBI" id="CHEBI:33019"/>
        <dbReference type="ChEBI" id="CHEBI:137562"/>
        <dbReference type="ChEBI" id="CHEBI:175763"/>
        <dbReference type="EC" id="4.2.3.164"/>
    </reaction>
</comment>
<comment type="cofactor">
    <cofactor evidence="1">
        <name>Mg(2+)</name>
        <dbReference type="ChEBI" id="CHEBI:18420"/>
    </cofactor>
    <text evidence="1">Binds 3 Mg(2+) ions per subunit.</text>
</comment>
<comment type="pathway">
    <text evidence="4">Secondary metabolite biosynthesis; terpenoid biosynthesis.</text>
</comment>
<comment type="domain">
    <text evidence="5">The Asp-Asp-Xaa-Xaa-Glu (DDXXE) motif is important for the catalytic activity, presumably through binding to Mg(2+).</text>
</comment>
<comment type="similarity">
    <text evidence="4">Belongs to the terpene synthase family.</text>
</comment>